<sequence>MAFFSPWKLSSQKLGFFLVTFGFIWGMMLLHFTIQQRTQPESSSMLREQILDLSKRYIKALAEENRNVVDGPYAGVMTAYDLKKTLAVLLDNILQRIGKLESKVDNLVNGTGANSTNSTTAVPSLVSLEKINVADIINGVQEKCVLPPMDGYPHCEGKIKWMKDMWRSDPCYADYGVDGTSCSFFIYLSEVENWCPRLPWRAKNPYEEADHNSLAEIRTDFNILYGMMKKHEEFRWMRLRIRRMADAWIQAIKSLAEKQNLEKRKRKKILVHLGLLTKESGFKIAETAFSGGPLGELVQWSDLITSLYLLGHDIRISASLAELKEIMKKVVGNRSGCPTVGDRIVELIYIDIVGLAQFKKTLGPSWVHYQCMLRVLDSFGTEPEFNHASYAQSKGHKTPWGKWNLNPQQFYTMFPHTPDNSFLGFVVEQHLNSSDIHHINEIKRQNQSLVYGKVDSFWKNKKIYLDIIHTYMEVHATVYGSSTKNIPSYVKNHGILSGRDLQFLLRETKLFVGLGFPYEGPAPLEAIANGCAFLNPKFNPPKSSKNTDFFIGKPTLRELTSQHPYAEVFIGRPHVWTVDLNNREEVEDAVKAILNQKIEPYMPYEFTCEGMLQRINAFIEKQDFCHGQVMWPPLSALQVKLAEPGQSCKQVCQESQLICEPSFFQHLNKEKDLLKYKVICQSSELYKDILVPSFYPKSKHCVFQGDLLLFSCAGAHPTHQRICPCRDFIKGQVALCKDCL</sequence>
<gene>
    <name type="primary">Mgat5</name>
</gene>
<dbReference type="EC" id="2.4.1.155" evidence="5 6"/>
<dbReference type="EMBL" id="L14284">
    <property type="protein sequence ID" value="AAA41665.1"/>
    <property type="molecule type" value="mRNA"/>
</dbReference>
<dbReference type="PIR" id="A47134">
    <property type="entry name" value="A47134"/>
</dbReference>
<dbReference type="RefSeq" id="NP_075583.1">
    <property type="nucleotide sequence ID" value="NM_023095.1"/>
</dbReference>
<dbReference type="RefSeq" id="XP_008767721.2">
    <property type="nucleotide sequence ID" value="XM_008769499.2"/>
</dbReference>
<dbReference type="RefSeq" id="XP_017454423.1">
    <property type="nucleotide sequence ID" value="XM_017598934.3"/>
</dbReference>
<dbReference type="RefSeq" id="XP_063128664.1">
    <property type="nucleotide sequence ID" value="XM_063272594.1"/>
</dbReference>
<dbReference type="RefSeq" id="XP_063128665.1">
    <property type="nucleotide sequence ID" value="XM_063272595.1"/>
</dbReference>
<dbReference type="RefSeq" id="XP_063128666.1">
    <property type="nucleotide sequence ID" value="XM_063272596.1"/>
</dbReference>
<dbReference type="SMR" id="Q08834"/>
<dbReference type="FunCoup" id="Q08834">
    <property type="interactions" value="985"/>
</dbReference>
<dbReference type="STRING" id="10116.ENSRNOP00000004995"/>
<dbReference type="ChEMBL" id="CHEMBL1795132"/>
<dbReference type="CAZy" id="GT18">
    <property type="family name" value="Glycosyltransferase Family 18"/>
</dbReference>
<dbReference type="GlyCosmos" id="Q08834">
    <property type="glycosylation" value="6 sites, No reported glycans"/>
</dbReference>
<dbReference type="GlyGen" id="Q08834">
    <property type="glycosylation" value="6 sites"/>
</dbReference>
<dbReference type="iPTMnet" id="Q08834"/>
<dbReference type="PhosphoSitePlus" id="Q08834"/>
<dbReference type="PaxDb" id="10116-ENSRNOP00000004995"/>
<dbReference type="Ensembl" id="ENSRNOT00000004995.5">
    <property type="protein sequence ID" value="ENSRNOP00000004995.2"/>
    <property type="gene ID" value="ENSRNOG00000003614.6"/>
</dbReference>
<dbReference type="GeneID" id="65271"/>
<dbReference type="KEGG" id="rno:65271"/>
<dbReference type="UCSC" id="RGD:620100">
    <property type="organism name" value="rat"/>
</dbReference>
<dbReference type="AGR" id="RGD:620100"/>
<dbReference type="CTD" id="4249"/>
<dbReference type="RGD" id="620100">
    <property type="gene designation" value="Mgat5"/>
</dbReference>
<dbReference type="eggNOG" id="ENOG502QTNG">
    <property type="taxonomic scope" value="Eukaryota"/>
</dbReference>
<dbReference type="GeneTree" id="ENSGT00940000153470"/>
<dbReference type="HOGENOM" id="CLU_016749_1_0_1"/>
<dbReference type="InParanoid" id="Q08834"/>
<dbReference type="OrthoDB" id="3931at9989"/>
<dbReference type="PhylomeDB" id="Q08834"/>
<dbReference type="TreeFam" id="TF313714"/>
<dbReference type="BRENDA" id="2.4.1.155">
    <property type="organism ID" value="5301"/>
</dbReference>
<dbReference type="Reactome" id="R-RNO-975577">
    <property type="pathway name" value="N-Glycan antennae elongation"/>
</dbReference>
<dbReference type="UniPathway" id="UPA00378"/>
<dbReference type="PRO" id="PR:Q08834"/>
<dbReference type="Proteomes" id="UP000002494">
    <property type="component" value="Chromosome 13"/>
</dbReference>
<dbReference type="Bgee" id="ENSRNOG00000003614">
    <property type="expression patterns" value="Expressed in frontal cortex and 18 other cell types or tissues"/>
</dbReference>
<dbReference type="ExpressionAtlas" id="Q08834">
    <property type="expression patterns" value="baseline and differential"/>
</dbReference>
<dbReference type="GO" id="GO:0005576">
    <property type="term" value="C:extracellular region"/>
    <property type="evidence" value="ECO:0007669"/>
    <property type="project" value="UniProtKB-SubCell"/>
</dbReference>
<dbReference type="GO" id="GO:0005794">
    <property type="term" value="C:Golgi apparatus"/>
    <property type="evidence" value="ECO:0000266"/>
    <property type="project" value="RGD"/>
</dbReference>
<dbReference type="GO" id="GO:0000139">
    <property type="term" value="C:Golgi membrane"/>
    <property type="evidence" value="ECO:0000250"/>
    <property type="project" value="UniProtKB"/>
</dbReference>
<dbReference type="GO" id="GO:0016020">
    <property type="term" value="C:membrane"/>
    <property type="evidence" value="ECO:0000266"/>
    <property type="project" value="RGD"/>
</dbReference>
<dbReference type="GO" id="GO:0008375">
    <property type="term" value="F:acetylglucosaminyltransferase activity"/>
    <property type="evidence" value="ECO:0000266"/>
    <property type="project" value="RGD"/>
</dbReference>
<dbReference type="GO" id="GO:0030144">
    <property type="term" value="F:alpha-1,6-mannosylglycoprotein 6-beta-N-acetylglucosaminyltransferase activity"/>
    <property type="evidence" value="ECO:0000250"/>
    <property type="project" value="UniProtKB"/>
</dbReference>
<dbReference type="GO" id="GO:0016757">
    <property type="term" value="F:glycosyltransferase activity"/>
    <property type="evidence" value="ECO:0000266"/>
    <property type="project" value="RGD"/>
</dbReference>
<dbReference type="GO" id="GO:0030145">
    <property type="term" value="F:manganese ion binding"/>
    <property type="evidence" value="ECO:0000250"/>
    <property type="project" value="UniProtKB"/>
</dbReference>
<dbReference type="GO" id="GO:0004864">
    <property type="term" value="F:protein phosphatase inhibitor activity"/>
    <property type="evidence" value="ECO:0000266"/>
    <property type="project" value="RGD"/>
</dbReference>
<dbReference type="GO" id="GO:0030335">
    <property type="term" value="P:positive regulation of cell migration"/>
    <property type="evidence" value="ECO:0000266"/>
    <property type="project" value="RGD"/>
</dbReference>
<dbReference type="GO" id="GO:1904894">
    <property type="term" value="P:positive regulation of receptor signaling pathway via STAT"/>
    <property type="evidence" value="ECO:0000266"/>
    <property type="project" value="RGD"/>
</dbReference>
<dbReference type="GO" id="GO:0006487">
    <property type="term" value="P:protein N-linked glycosylation"/>
    <property type="evidence" value="ECO:0000266"/>
    <property type="project" value="RGD"/>
</dbReference>
<dbReference type="GO" id="GO:0018279">
    <property type="term" value="P:protein N-linked glycosylation via asparagine"/>
    <property type="evidence" value="ECO:0000250"/>
    <property type="project" value="UniProtKB"/>
</dbReference>
<dbReference type="InterPro" id="IPR026116">
    <property type="entry name" value="GT18_cat"/>
</dbReference>
<dbReference type="InterPro" id="IPR052105">
    <property type="entry name" value="MGAT5_Glycosyltransferase"/>
</dbReference>
<dbReference type="InterPro" id="IPR027833">
    <property type="entry name" value="MGT5A-like_N"/>
</dbReference>
<dbReference type="PANTHER" id="PTHR15075:SF5">
    <property type="entry name" value="ALPHA-1,6-MANNOSYLGLYCOPROTEIN 6-BETA-N-ACETYLGLUCOSAMINYLTRANSFERASE A"/>
    <property type="match status" value="1"/>
</dbReference>
<dbReference type="PANTHER" id="PTHR15075">
    <property type="entry name" value="ALPHA-MANNOSIDE BETA-1,6-N-ACETYLGLUCOSAMINYLTRANSFERASE"/>
    <property type="match status" value="1"/>
</dbReference>
<dbReference type="Pfam" id="PF15024">
    <property type="entry name" value="Glyco_transf_18"/>
    <property type="match status" value="1"/>
</dbReference>
<dbReference type="Pfam" id="PF15027">
    <property type="entry name" value="MGT5A_N"/>
    <property type="match status" value="1"/>
</dbReference>
<protein>
    <recommendedName>
        <fullName>Alpha-1,6-mannosylglycoprotein 6-beta-N-acetylglucosaminyltransferase A</fullName>
        <ecNumber evidence="5 6">2.4.1.155</ecNumber>
    </recommendedName>
    <alternativeName>
        <fullName>Alpha-mannoside beta-1,6-N-acetylglucosaminyltransferase</fullName>
    </alternativeName>
    <alternativeName>
        <fullName evidence="7 8">GlcNAc-T V</fullName>
        <shortName>GNT-V</shortName>
    </alternativeName>
    <alternativeName>
        <fullName>Mannoside acetylglucosaminyltransferase 5</fullName>
    </alternativeName>
    <alternativeName>
        <fullName evidence="8">N-acetylglucosaminyl-transferase V</fullName>
    </alternativeName>
    <component>
        <recommendedName>
            <fullName evidence="9">Secreted alpha-1,6-mannosylglycoprotein 6-beta-N-acetylglucosaminyltransferase A</fullName>
        </recommendedName>
        <alternativeName>
            <fullName evidence="9">Secreted beta-1,6-N-acetylglucosaminyltransferase V</fullName>
            <shortName evidence="9">Secreted GNT-V</shortName>
        </alternativeName>
    </component>
</protein>
<name>MGT5A_RAT</name>
<reference key="1">
    <citation type="journal article" date="1993" name="J. Biol. Chem.">
        <title>Isolation, characterization, and expression of a cDNA encoding N-acetylglucosaminyltransferase V.</title>
        <authorList>
            <person name="Shoreibah M."/>
            <person name="Perng G.-S."/>
            <person name="Adler B."/>
            <person name="Weinstein J."/>
            <person name="Basu R."/>
            <person name="Cupples R."/>
            <person name="Wen D."/>
            <person name="Browne J.K."/>
            <person name="Buckhaults P."/>
            <person name="Fregien N."/>
            <person name="Pierce M."/>
        </authorList>
    </citation>
    <scope>NUCLEOTIDE SEQUENCE [MRNA]</scope>
    <scope>PROTEIN SEQUENCE OF 375-386; 546-557 AND 592-607</scope>
    <scope>FUNCTION</scope>
    <scope>CATALYTIC ACTIVITY</scope>
    <scope>PATHWAY</scope>
    <scope>TISSUE SPECIFICITY</scope>
    <source>
        <tissue>Kidney</tissue>
    </source>
</reference>
<reference key="2">
    <citation type="journal article" date="1995" name="J. Cell Biol.">
        <title>Reduced contact-inhibition and substratum adhesion in epithelial cells expressing GlcNAc-transferase V.</title>
        <authorList>
            <person name="Demetriou M."/>
            <person name="Nabi I.R."/>
            <person name="Coppolino M."/>
            <person name="Dedhar S."/>
            <person name="Dennis J.W."/>
        </authorList>
    </citation>
    <scope>FUNCTION</scope>
    <scope>CATALYTIC ACTIVITY</scope>
    <scope>PATHWAY</scope>
</reference>
<reference key="3">
    <citation type="journal article" date="2006" name="Proc. Natl. Acad. Sci. U.S.A.">
        <title>Quantitative phosphoproteomics of vasopressin-sensitive renal cells: regulation of aquaporin-2 phosphorylation at two sites.</title>
        <authorList>
            <person name="Hoffert J.D."/>
            <person name="Pisitkun T."/>
            <person name="Wang G."/>
            <person name="Shen R.-F."/>
            <person name="Knepper M.A."/>
        </authorList>
    </citation>
    <scope>IDENTIFICATION BY MASS SPECTROMETRY [LARGE SCALE ANALYSIS]</scope>
</reference>
<organism>
    <name type="scientific">Rattus norvegicus</name>
    <name type="common">Rat</name>
    <dbReference type="NCBI Taxonomy" id="10116"/>
    <lineage>
        <taxon>Eukaryota</taxon>
        <taxon>Metazoa</taxon>
        <taxon>Chordata</taxon>
        <taxon>Craniata</taxon>
        <taxon>Vertebrata</taxon>
        <taxon>Euteleostomi</taxon>
        <taxon>Mammalia</taxon>
        <taxon>Eutheria</taxon>
        <taxon>Euarchontoglires</taxon>
        <taxon>Glires</taxon>
        <taxon>Rodentia</taxon>
        <taxon>Myomorpha</taxon>
        <taxon>Muroidea</taxon>
        <taxon>Muridae</taxon>
        <taxon>Murinae</taxon>
        <taxon>Rattus</taxon>
    </lineage>
</organism>
<proteinExistence type="evidence at protein level"/>
<feature type="chain" id="PRO_0000080524" description="Alpha-1,6-mannosylglycoprotein 6-beta-N-acetylglucosaminyltransferase A">
    <location>
        <begin position="1"/>
        <end position="740"/>
    </location>
</feature>
<feature type="chain" id="PRO_0000445694" description="Secreted alpha-1,6-mannosylglycoprotein 6-beta-N-acetylglucosaminyltransferase A" evidence="2">
    <location>
        <begin position="31"/>
        <end position="740"/>
    </location>
</feature>
<feature type="topological domain" description="Cytoplasmic" evidence="4">
    <location>
        <begin position="1"/>
        <end position="13"/>
    </location>
</feature>
<feature type="transmembrane region" description="Helical; Signal-anchor for type II membrane protein" evidence="4">
    <location>
        <begin position="14"/>
        <end position="30"/>
    </location>
</feature>
<feature type="topological domain" description="Lumenal" evidence="4">
    <location>
        <begin position="31"/>
        <end position="740"/>
    </location>
</feature>
<feature type="region of interest" description="Sufficient for catalytic activity" evidence="2">
    <location>
        <begin position="212"/>
        <end position="740"/>
    </location>
</feature>
<feature type="binding site" evidence="2">
    <location>
        <begin position="377"/>
        <end position="378"/>
    </location>
    <ligand>
        <name>substrate</name>
    </ligand>
</feature>
<feature type="binding site" evidence="2">
    <location>
        <position position="525"/>
    </location>
    <ligand>
        <name>UDP-N-acetyl-alpha-D-glucosamine</name>
        <dbReference type="ChEBI" id="CHEBI:57705"/>
    </ligand>
</feature>
<feature type="binding site" evidence="2">
    <location>
        <position position="553"/>
    </location>
    <ligand>
        <name>substrate</name>
    </ligand>
</feature>
<feature type="glycosylation site" description="N-linked (GlcNAc...) asparagine" evidence="4">
    <location>
        <position position="109"/>
    </location>
</feature>
<feature type="glycosylation site" description="N-linked (GlcNAc...) asparagine" evidence="4">
    <location>
        <position position="114"/>
    </location>
</feature>
<feature type="glycosylation site" description="N-linked (GlcNAc...) asparagine" evidence="4">
    <location>
        <position position="117"/>
    </location>
</feature>
<feature type="glycosylation site" description="N-linked (GlcNAc...) asparagine" evidence="4">
    <location>
        <position position="333"/>
    </location>
</feature>
<feature type="glycosylation site" description="N-linked (GlcNAc...) asparagine" evidence="4">
    <location>
        <position position="432"/>
    </location>
</feature>
<feature type="glycosylation site" description="N-linked (GlcNAc...) asparagine" evidence="4">
    <location>
        <position position="446"/>
    </location>
</feature>
<feature type="disulfide bond" evidence="2">
    <location>
        <begin position="144"/>
        <end position="182"/>
    </location>
</feature>
<feature type="disulfide bond" evidence="2">
    <location>
        <begin position="155"/>
        <end position="195"/>
    </location>
</feature>
<feature type="disulfide bond" evidence="2">
    <location>
        <begin position="171"/>
        <end position="337"/>
    </location>
</feature>
<feature type="disulfide bond" evidence="2">
    <location>
        <begin position="371"/>
        <end position="625"/>
    </location>
</feature>
<feature type="disulfide bond" evidence="2">
    <location>
        <begin position="648"/>
        <end position="723"/>
    </location>
</feature>
<feature type="disulfide bond" evidence="2">
    <location>
        <begin position="652"/>
        <end position="725"/>
    </location>
</feature>
<feature type="disulfide bond" evidence="2">
    <location>
        <begin position="659"/>
        <end position="712"/>
    </location>
</feature>
<feature type="disulfide bond" evidence="2">
    <location>
        <begin position="680"/>
        <end position="701"/>
    </location>
</feature>
<feature type="disulfide bond" evidence="2">
    <location>
        <begin position="736"/>
        <end position="739"/>
    </location>
</feature>
<accession>Q08834</accession>
<keyword id="KW-0903">Direct protein sequencing</keyword>
<keyword id="KW-1015">Disulfide bond</keyword>
<keyword id="KW-0325">Glycoprotein</keyword>
<keyword id="KW-0328">Glycosyltransferase</keyword>
<keyword id="KW-0333">Golgi apparatus</keyword>
<keyword id="KW-0472">Membrane</keyword>
<keyword id="KW-1185">Reference proteome</keyword>
<keyword id="KW-0964">Secreted</keyword>
<keyword id="KW-0735">Signal-anchor</keyword>
<keyword id="KW-0808">Transferase</keyword>
<keyword id="KW-0812">Transmembrane</keyword>
<keyword id="KW-1133">Transmembrane helix</keyword>
<evidence type="ECO:0000250" key="1">
    <source>
        <dbReference type="UniProtKB" id="P97259"/>
    </source>
</evidence>
<evidence type="ECO:0000250" key="2">
    <source>
        <dbReference type="UniProtKB" id="Q09328"/>
    </source>
</evidence>
<evidence type="ECO:0000250" key="3">
    <source>
        <dbReference type="UniProtKB" id="Q8R4G6"/>
    </source>
</evidence>
<evidence type="ECO:0000255" key="4"/>
<evidence type="ECO:0000269" key="5">
    <source>
    </source>
</evidence>
<evidence type="ECO:0000269" key="6">
    <source>
    </source>
</evidence>
<evidence type="ECO:0000303" key="7">
    <source>
    </source>
</evidence>
<evidence type="ECO:0000303" key="8">
    <source>
    </source>
</evidence>
<evidence type="ECO:0000305" key="9"/>
<comment type="function">
    <text evidence="2 3 5 6">Catalyzes the addition of N-acetylglucosamine (GlcNAc) in beta 1-6 linkage to the alpha-linked mannose of biantennary N-linked oligosaccharides (PubMed:7615638, PubMed:8340368). Catalyzes an important step in the biosynthesis of branched, complex-type N-glycans, such as those found on EGFR, TGFR (TGF-beta receptor) and CDH2 (By similarity). Via its role in the biosynthesis of complex N-glycans, plays an important role in the activation of cellular signaling pathways, reorganization of the actin cytoskeleton, cell-cell adhesion and cell migration (PubMed:7615638). MGAT5-dependent EGFR N-glycosylation enhances the interaction between EGFR and LGALS3 and thereby prevents rapid EGFR endocytosis and prolongs EGFR signaling. Required for efficient interaction between TGFB1 and its receptor. Enhances activation of intracellular signaling pathways by several types of growth factors, including FGF2, PDGF, IGF, TGFB1 and EGF. MGAT5-dependent CDH2 N-glycosylation inhibits CDH2-mediated homotypic cell-cell adhesion and contributes to the regulation of downstream signaling pathways. Promotes cell migration. Contributes to the regulation of the inflammatory response. MGAT5-dependent TCR N-glycosylation enhances the interaction between TCR and LGALS3, limits agonist-induced TCR clustering, and thereby dampens TCR-mediated responses to antigens. Required for normal leukocyte evasation and accumulation at sites of inflammation (By similarity). Inhibits attachment of monocytes to the vascular endothelium and subsequent monocyte diapedesis (By similarity).</text>
</comment>
<comment type="function">
    <molecule>Secreted alpha-1,6-mannosylglycoprotein 6-beta-N-acetylglucosaminyltransferase A</molecule>
    <text evidence="2">Promotes proliferation of umbilical vein endothelial cells and angiogenesis, at least in part by promoting the release of the growth factor FGF2 from the extracellular matrix.</text>
</comment>
<comment type="catalytic activity">
    <reaction evidence="5 6">
        <text>N(4)-{beta-D-GlcNAc-(1-&gt;2)-[beta-D-GlcNAc-(1-&gt;4)]-alpha-D-Man-(1-&gt;3)-[beta-D-GlcNAc-(1-&gt;2)-alpha-D-Man-(1-&gt;6)]-beta-D-Man-(1-&gt;4)-beta-D-GlcNAc-(1-&gt;4)-beta-D-GlcNAc}-L-asparaginyl-[protein] + UDP-N-acetyl-alpha-D-glucosamine = N(4)-{beta-D-GlcNAc-(1-&gt;2)-[beta-D-GlcNAc-(1-&gt;4)]-alpha-D-Man-(1-&gt;3)-[beta-D-GlcNAc-(1-&gt;2)-[beta-D-GlcNAc-(1-&gt;6)]-alpha-D-Man-(1-&gt;6)]-beta-D-Man-(1-&gt;4)-beta-D-GlcNAc-(1-&gt;4)-beta-D-GlcNAc}-L-asparaginyl-[protein] + UDP + H(+)</text>
        <dbReference type="Rhea" id="RHEA:16921"/>
        <dbReference type="Rhea" id="RHEA-COMP:14374"/>
        <dbReference type="Rhea" id="RHEA-COMP:14377"/>
        <dbReference type="ChEBI" id="CHEBI:15378"/>
        <dbReference type="ChEBI" id="CHEBI:57705"/>
        <dbReference type="ChEBI" id="CHEBI:58223"/>
        <dbReference type="ChEBI" id="CHEBI:139507"/>
        <dbReference type="ChEBI" id="CHEBI:139510"/>
        <dbReference type="EC" id="2.4.1.155"/>
    </reaction>
</comment>
<comment type="pathway">
    <text evidence="5 6">Protein modification; protein glycosylation.</text>
</comment>
<comment type="subcellular location">
    <subcellularLocation>
        <location evidence="1">Golgi apparatus membrane</location>
        <topology evidence="2">Single-pass type II membrane protein</topology>
    </subcellularLocation>
</comment>
<comment type="subcellular location">
    <molecule>Secreted alpha-1,6-mannosylglycoprotein 6-beta-N-acetylglucosaminyltransferase A</molecule>
    <subcellularLocation>
        <location evidence="2">Secreted</location>
    </subcellularLocation>
</comment>
<comment type="tissue specificity">
    <text evidence="6">Detected in kidney (at protein level). Detected in kidney.</text>
</comment>
<comment type="PTM">
    <text evidence="2">N-glycosylated.</text>
</comment>
<comment type="PTM">
    <text evidence="2">A secreted form is released from the membrane after cleavage by gamma-secretase.</text>
</comment>
<comment type="similarity">
    <text evidence="9">Belongs to the glycosyltransferase 18 family.</text>
</comment>